<proteinExistence type="inferred from homology"/>
<accession>Q9FF19</accession>
<feature type="signal peptide" evidence="1">
    <location>
        <begin position="1"/>
        <end position="20"/>
    </location>
</feature>
<feature type="chain" id="PRO_5009348286" description="S-protein homolog 9">
    <location>
        <begin position="21"/>
        <end position="133"/>
    </location>
</feature>
<protein>
    <recommendedName>
        <fullName evidence="2">S-protein homolog 9</fullName>
    </recommendedName>
</protein>
<sequence>MNRLSCFLLVIGLCIGLSNANLIWNEKNTVFFKSSLGRNNVLKIHCTSEDNLGFHFLRPGETYDFSFHDSIVRSDFYCELWQGPNFKFHASFMAYQGGGLIVHYGKKNFWDAREDGIYFTHGKETPKLEYKWK</sequence>
<gene>
    <name evidence="2" type="primary">SPH9</name>
    <name evidence="5" type="ordered locus">At5g38440</name>
    <name evidence="6" type="ORF">MXI10.17</name>
</gene>
<reference key="1">
    <citation type="journal article" date="1997" name="DNA Res.">
        <title>Structural analysis of Arabidopsis thaliana chromosome 5. I. Sequence features of the 1.6 Mb regions covered by twenty physically assigned P1 clones.</title>
        <authorList>
            <person name="Sato S."/>
            <person name="Kotani H."/>
            <person name="Nakamura Y."/>
            <person name="Kaneko T."/>
            <person name="Asamizu E."/>
            <person name="Fukami M."/>
            <person name="Miyajima N."/>
            <person name="Tabata S."/>
        </authorList>
    </citation>
    <scope>NUCLEOTIDE SEQUENCE [LARGE SCALE GENOMIC DNA]</scope>
    <source>
        <strain>cv. Columbia</strain>
    </source>
</reference>
<reference key="2">
    <citation type="journal article" date="2017" name="Plant J.">
        <title>Araport11: a complete reannotation of the Arabidopsis thaliana reference genome.</title>
        <authorList>
            <person name="Cheng C.Y."/>
            <person name="Krishnakumar V."/>
            <person name="Chan A.P."/>
            <person name="Thibaud-Nissen F."/>
            <person name="Schobel S."/>
            <person name="Town C.D."/>
        </authorList>
    </citation>
    <scope>GENOME REANNOTATION</scope>
    <source>
        <strain>cv. Columbia</strain>
    </source>
</reference>
<reference key="3">
    <citation type="journal article" date="1999" name="Plant Mol. Biol.">
        <title>Analysis of Arabidopsis genome sequence reveals a large new gene family in plants.</title>
        <authorList>
            <person name="Ride J.P."/>
            <person name="Davies E.M."/>
            <person name="Franklin F.C.H."/>
            <person name="Marshall D.F."/>
        </authorList>
    </citation>
    <scope>GENE FAMILY</scope>
    <scope>NOMENCLATURE</scope>
    <source>
        <strain>cv. Columbia</strain>
    </source>
</reference>
<comment type="subcellular location">
    <subcellularLocation>
        <location evidence="4">Secreted</location>
    </subcellularLocation>
</comment>
<comment type="similarity">
    <text evidence="3">Belongs to the plant self-incompatibility (S1) protein family.</text>
</comment>
<dbReference type="EMBL" id="AB005248">
    <property type="protein sequence ID" value="BAB09356.1"/>
    <property type="molecule type" value="Genomic_DNA"/>
</dbReference>
<dbReference type="EMBL" id="CP002688">
    <property type="protein sequence ID" value="AED94317.1"/>
    <property type="molecule type" value="Genomic_DNA"/>
</dbReference>
<dbReference type="RefSeq" id="NP_198660.1">
    <property type="nucleotide sequence ID" value="NM_123205.1"/>
</dbReference>
<dbReference type="SMR" id="Q9FF19"/>
<dbReference type="STRING" id="3702.Q9FF19"/>
<dbReference type="PaxDb" id="3702-AT5G38440.1"/>
<dbReference type="EnsemblPlants" id="AT5G38440.1">
    <property type="protein sequence ID" value="AT5G38440.1"/>
    <property type="gene ID" value="AT5G38440"/>
</dbReference>
<dbReference type="GeneID" id="833832"/>
<dbReference type="Gramene" id="AT5G38440.1">
    <property type="protein sequence ID" value="AT5G38440.1"/>
    <property type="gene ID" value="AT5G38440"/>
</dbReference>
<dbReference type="KEGG" id="ath:AT5G38440"/>
<dbReference type="Araport" id="AT5G38440"/>
<dbReference type="TAIR" id="AT5G38440"/>
<dbReference type="HOGENOM" id="CLU_125658_3_1_1"/>
<dbReference type="InParanoid" id="Q9FF19"/>
<dbReference type="OMA" id="FHASFMA"/>
<dbReference type="PhylomeDB" id="Q9FF19"/>
<dbReference type="PRO" id="PR:Q9FF19"/>
<dbReference type="Proteomes" id="UP000006548">
    <property type="component" value="Chromosome 5"/>
</dbReference>
<dbReference type="ExpressionAtlas" id="Q9FF19">
    <property type="expression patterns" value="baseline and differential"/>
</dbReference>
<dbReference type="GO" id="GO:0005576">
    <property type="term" value="C:extracellular region"/>
    <property type="evidence" value="ECO:0007669"/>
    <property type="project" value="UniProtKB-SubCell"/>
</dbReference>
<dbReference type="GO" id="GO:0060320">
    <property type="term" value="P:rejection of self pollen"/>
    <property type="evidence" value="ECO:0007669"/>
    <property type="project" value="UniProtKB-KW"/>
</dbReference>
<dbReference type="InterPro" id="IPR010264">
    <property type="entry name" value="Self-incomp_S1"/>
</dbReference>
<dbReference type="PANTHER" id="PTHR31232">
    <property type="match status" value="1"/>
</dbReference>
<dbReference type="PANTHER" id="PTHR31232:SF135">
    <property type="entry name" value="S-PROTEIN HOMOLOG 9"/>
    <property type="match status" value="1"/>
</dbReference>
<dbReference type="Pfam" id="PF05938">
    <property type="entry name" value="Self-incomp_S1"/>
    <property type="match status" value="1"/>
</dbReference>
<name>SPH9_ARATH</name>
<keyword id="KW-1185">Reference proteome</keyword>
<keyword id="KW-0964">Secreted</keyword>
<keyword id="KW-0713">Self-incompatibility</keyword>
<keyword id="KW-0732">Signal</keyword>
<organism>
    <name type="scientific">Arabidopsis thaliana</name>
    <name type="common">Mouse-ear cress</name>
    <dbReference type="NCBI Taxonomy" id="3702"/>
    <lineage>
        <taxon>Eukaryota</taxon>
        <taxon>Viridiplantae</taxon>
        <taxon>Streptophyta</taxon>
        <taxon>Embryophyta</taxon>
        <taxon>Tracheophyta</taxon>
        <taxon>Spermatophyta</taxon>
        <taxon>Magnoliopsida</taxon>
        <taxon>eudicotyledons</taxon>
        <taxon>Gunneridae</taxon>
        <taxon>Pentapetalae</taxon>
        <taxon>rosids</taxon>
        <taxon>malvids</taxon>
        <taxon>Brassicales</taxon>
        <taxon>Brassicaceae</taxon>
        <taxon>Camelineae</taxon>
        <taxon>Arabidopsis</taxon>
    </lineage>
</organism>
<evidence type="ECO:0000255" key="1"/>
<evidence type="ECO:0000303" key="2">
    <source>
    </source>
</evidence>
<evidence type="ECO:0000305" key="3"/>
<evidence type="ECO:0000305" key="4">
    <source>
    </source>
</evidence>
<evidence type="ECO:0000312" key="5">
    <source>
        <dbReference type="Araport" id="AT5G38440"/>
    </source>
</evidence>
<evidence type="ECO:0000312" key="6">
    <source>
        <dbReference type="EMBL" id="BAB09356.1"/>
    </source>
</evidence>